<dbReference type="EMBL" id="AP009240">
    <property type="protein sequence ID" value="BAG79545.1"/>
    <property type="molecule type" value="Genomic_DNA"/>
</dbReference>
<dbReference type="RefSeq" id="WP_001251965.1">
    <property type="nucleotide sequence ID" value="NC_011415.1"/>
</dbReference>
<dbReference type="SMR" id="B6I3W8"/>
<dbReference type="KEGG" id="ecy:ECSE_4021"/>
<dbReference type="HOGENOM" id="CLU_084338_2_0_6"/>
<dbReference type="Proteomes" id="UP000008199">
    <property type="component" value="Chromosome"/>
</dbReference>
<dbReference type="GO" id="GO:0005886">
    <property type="term" value="C:plasma membrane"/>
    <property type="evidence" value="ECO:0007669"/>
    <property type="project" value="UniProtKB-SubCell"/>
</dbReference>
<dbReference type="GO" id="GO:0045259">
    <property type="term" value="C:proton-transporting ATP synthase complex"/>
    <property type="evidence" value="ECO:0007669"/>
    <property type="project" value="UniProtKB-KW"/>
</dbReference>
<dbReference type="GO" id="GO:0005524">
    <property type="term" value="F:ATP binding"/>
    <property type="evidence" value="ECO:0007669"/>
    <property type="project" value="UniProtKB-UniRule"/>
</dbReference>
<dbReference type="GO" id="GO:0046933">
    <property type="term" value="F:proton-transporting ATP synthase activity, rotational mechanism"/>
    <property type="evidence" value="ECO:0007669"/>
    <property type="project" value="UniProtKB-UniRule"/>
</dbReference>
<dbReference type="CDD" id="cd12152">
    <property type="entry name" value="F1-ATPase_delta"/>
    <property type="match status" value="1"/>
</dbReference>
<dbReference type="FunFam" id="1.20.5.440:FF:000001">
    <property type="entry name" value="ATP synthase epsilon chain"/>
    <property type="match status" value="1"/>
</dbReference>
<dbReference type="FunFam" id="2.60.15.10:FF:000001">
    <property type="entry name" value="ATP synthase epsilon chain"/>
    <property type="match status" value="1"/>
</dbReference>
<dbReference type="Gene3D" id="1.20.5.440">
    <property type="entry name" value="ATP synthase delta/epsilon subunit, C-terminal domain"/>
    <property type="match status" value="1"/>
</dbReference>
<dbReference type="Gene3D" id="2.60.15.10">
    <property type="entry name" value="F0F1 ATP synthase delta/epsilon subunit, N-terminal"/>
    <property type="match status" value="1"/>
</dbReference>
<dbReference type="HAMAP" id="MF_00530">
    <property type="entry name" value="ATP_synth_epsil_bac"/>
    <property type="match status" value="1"/>
</dbReference>
<dbReference type="InterPro" id="IPR036794">
    <property type="entry name" value="ATP_F1_dsu/esu_C_sf"/>
</dbReference>
<dbReference type="InterPro" id="IPR001469">
    <property type="entry name" value="ATP_synth_F1_dsu/esu"/>
</dbReference>
<dbReference type="InterPro" id="IPR020546">
    <property type="entry name" value="ATP_synth_F1_dsu/esu_N"/>
</dbReference>
<dbReference type="InterPro" id="IPR020547">
    <property type="entry name" value="ATP_synth_F1_esu_C"/>
</dbReference>
<dbReference type="InterPro" id="IPR036771">
    <property type="entry name" value="ATPsynth_dsu/esu_N"/>
</dbReference>
<dbReference type="NCBIfam" id="TIGR01216">
    <property type="entry name" value="ATP_synt_epsi"/>
    <property type="match status" value="1"/>
</dbReference>
<dbReference type="NCBIfam" id="NF001847">
    <property type="entry name" value="PRK00571.1-4"/>
    <property type="match status" value="1"/>
</dbReference>
<dbReference type="PANTHER" id="PTHR13822">
    <property type="entry name" value="ATP SYNTHASE DELTA/EPSILON CHAIN"/>
    <property type="match status" value="1"/>
</dbReference>
<dbReference type="PANTHER" id="PTHR13822:SF10">
    <property type="entry name" value="ATP SYNTHASE EPSILON CHAIN, CHLOROPLASTIC"/>
    <property type="match status" value="1"/>
</dbReference>
<dbReference type="Pfam" id="PF00401">
    <property type="entry name" value="ATP-synt_DE"/>
    <property type="match status" value="1"/>
</dbReference>
<dbReference type="Pfam" id="PF02823">
    <property type="entry name" value="ATP-synt_DE_N"/>
    <property type="match status" value="1"/>
</dbReference>
<dbReference type="SUPFAM" id="SSF46604">
    <property type="entry name" value="Epsilon subunit of F1F0-ATP synthase C-terminal domain"/>
    <property type="match status" value="1"/>
</dbReference>
<dbReference type="SUPFAM" id="SSF51344">
    <property type="entry name" value="Epsilon subunit of F1F0-ATP synthase N-terminal domain"/>
    <property type="match status" value="1"/>
</dbReference>
<protein>
    <recommendedName>
        <fullName evidence="1">ATP synthase epsilon chain</fullName>
    </recommendedName>
    <alternativeName>
        <fullName evidence="1">ATP synthase F1 sector epsilon subunit</fullName>
    </alternativeName>
    <alternativeName>
        <fullName evidence="1">F-ATPase epsilon subunit</fullName>
    </alternativeName>
</protein>
<keyword id="KW-0066">ATP synthesis</keyword>
<keyword id="KW-0997">Cell inner membrane</keyword>
<keyword id="KW-1003">Cell membrane</keyword>
<keyword id="KW-0139">CF(1)</keyword>
<keyword id="KW-0375">Hydrogen ion transport</keyword>
<keyword id="KW-0406">Ion transport</keyword>
<keyword id="KW-0472">Membrane</keyword>
<keyword id="KW-0813">Transport</keyword>
<sequence>MAMTYHLDVVSAEQQMFSGLVEKIQVTGSEGELGIYPGHAPLLTAIKPGMIRIVKQHGHEEFIYLSGGILEVQPGNVTVLADTAIRGQDLDEARAMEAKRKAEEHISSSHGDVDYAQASAELAKAIAQLRVIELTKKAM</sequence>
<proteinExistence type="inferred from homology"/>
<gene>
    <name evidence="1" type="primary">atpC</name>
    <name type="ordered locus">ECSE_4021</name>
</gene>
<name>ATPE_ECOSE</name>
<feature type="chain" id="PRO_1000127855" description="ATP synthase epsilon chain">
    <location>
        <begin position="1"/>
        <end position="139"/>
    </location>
</feature>
<accession>B6I3W8</accession>
<comment type="function">
    <text evidence="1">Produces ATP from ADP in the presence of a proton gradient across the membrane.</text>
</comment>
<comment type="subunit">
    <text evidence="1">F-type ATPases have 2 components, CF(1) - the catalytic core - and CF(0) - the membrane proton channel. CF(1) has five subunits: alpha(3), beta(3), gamma(1), delta(1), epsilon(1). CF(0) has three main subunits: a, b and c.</text>
</comment>
<comment type="subcellular location">
    <subcellularLocation>
        <location evidence="1">Cell inner membrane</location>
        <topology evidence="1">Peripheral membrane protein</topology>
    </subcellularLocation>
</comment>
<comment type="similarity">
    <text evidence="1">Belongs to the ATPase epsilon chain family.</text>
</comment>
<evidence type="ECO:0000255" key="1">
    <source>
        <dbReference type="HAMAP-Rule" id="MF_00530"/>
    </source>
</evidence>
<reference key="1">
    <citation type="journal article" date="2008" name="DNA Res.">
        <title>Complete genome sequence and comparative analysis of the wild-type commensal Escherichia coli strain SE11 isolated from a healthy adult.</title>
        <authorList>
            <person name="Oshima K."/>
            <person name="Toh H."/>
            <person name="Ogura Y."/>
            <person name="Sasamoto H."/>
            <person name="Morita H."/>
            <person name="Park S.-H."/>
            <person name="Ooka T."/>
            <person name="Iyoda S."/>
            <person name="Taylor T.D."/>
            <person name="Hayashi T."/>
            <person name="Itoh K."/>
            <person name="Hattori M."/>
        </authorList>
    </citation>
    <scope>NUCLEOTIDE SEQUENCE [LARGE SCALE GENOMIC DNA]</scope>
    <source>
        <strain>SE11</strain>
    </source>
</reference>
<organism>
    <name type="scientific">Escherichia coli (strain SE11)</name>
    <dbReference type="NCBI Taxonomy" id="409438"/>
    <lineage>
        <taxon>Bacteria</taxon>
        <taxon>Pseudomonadati</taxon>
        <taxon>Pseudomonadota</taxon>
        <taxon>Gammaproteobacteria</taxon>
        <taxon>Enterobacterales</taxon>
        <taxon>Enterobacteriaceae</taxon>
        <taxon>Escherichia</taxon>
    </lineage>
</organism>